<accession>Q5Z0X7</accession>
<gene>
    <name evidence="1" type="primary">murA</name>
    <name type="ordered locus">NFA_10690</name>
</gene>
<keyword id="KW-0131">Cell cycle</keyword>
<keyword id="KW-0132">Cell division</keyword>
<keyword id="KW-0133">Cell shape</keyword>
<keyword id="KW-0961">Cell wall biogenesis/degradation</keyword>
<keyword id="KW-0963">Cytoplasm</keyword>
<keyword id="KW-0573">Peptidoglycan synthesis</keyword>
<keyword id="KW-1185">Reference proteome</keyword>
<keyword id="KW-0808">Transferase</keyword>
<reference key="1">
    <citation type="journal article" date="2004" name="Proc. Natl. Acad. Sci. U.S.A.">
        <title>The complete genomic sequence of Nocardia farcinica IFM 10152.</title>
        <authorList>
            <person name="Ishikawa J."/>
            <person name="Yamashita A."/>
            <person name="Mikami Y."/>
            <person name="Hoshino Y."/>
            <person name="Kurita H."/>
            <person name="Hotta K."/>
            <person name="Shiba T."/>
            <person name="Hattori M."/>
        </authorList>
    </citation>
    <scope>NUCLEOTIDE SEQUENCE [LARGE SCALE GENOMIC DNA]</scope>
    <source>
        <strain>IFM 10152</strain>
    </source>
</reference>
<evidence type="ECO:0000255" key="1">
    <source>
        <dbReference type="HAMAP-Rule" id="MF_00111"/>
    </source>
</evidence>
<organism>
    <name type="scientific">Nocardia farcinica (strain IFM 10152)</name>
    <dbReference type="NCBI Taxonomy" id="247156"/>
    <lineage>
        <taxon>Bacteria</taxon>
        <taxon>Bacillati</taxon>
        <taxon>Actinomycetota</taxon>
        <taxon>Actinomycetes</taxon>
        <taxon>Mycobacteriales</taxon>
        <taxon>Nocardiaceae</taxon>
        <taxon>Nocardia</taxon>
    </lineage>
</organism>
<feature type="chain" id="PRO_0000231230" description="UDP-N-acetylglucosamine 1-carboxyvinyltransferase">
    <location>
        <begin position="1"/>
        <end position="426"/>
    </location>
</feature>
<feature type="active site" description="Proton donor" evidence="1">
    <location>
        <position position="123"/>
    </location>
</feature>
<feature type="binding site" evidence="1">
    <location>
        <begin position="23"/>
        <end position="24"/>
    </location>
    <ligand>
        <name>phosphoenolpyruvate</name>
        <dbReference type="ChEBI" id="CHEBI:58702"/>
    </ligand>
</feature>
<feature type="binding site" evidence="1">
    <location>
        <position position="99"/>
    </location>
    <ligand>
        <name>UDP-N-acetyl-alpha-D-glucosamine</name>
        <dbReference type="ChEBI" id="CHEBI:57705"/>
    </ligand>
</feature>
<feature type="binding site" evidence="1">
    <location>
        <position position="311"/>
    </location>
    <ligand>
        <name>UDP-N-acetyl-alpha-D-glucosamine</name>
        <dbReference type="ChEBI" id="CHEBI:57705"/>
    </ligand>
</feature>
<feature type="binding site" evidence="1">
    <location>
        <position position="333"/>
    </location>
    <ligand>
        <name>UDP-N-acetyl-alpha-D-glucosamine</name>
        <dbReference type="ChEBI" id="CHEBI:57705"/>
    </ligand>
</feature>
<name>MURA_NOCFA</name>
<comment type="function">
    <text evidence="1">Cell wall formation. Adds enolpyruvyl to UDP-N-acetylglucosamine.</text>
</comment>
<comment type="catalytic activity">
    <reaction evidence="1">
        <text>phosphoenolpyruvate + UDP-N-acetyl-alpha-D-glucosamine = UDP-N-acetyl-3-O-(1-carboxyvinyl)-alpha-D-glucosamine + phosphate</text>
        <dbReference type="Rhea" id="RHEA:18681"/>
        <dbReference type="ChEBI" id="CHEBI:43474"/>
        <dbReference type="ChEBI" id="CHEBI:57705"/>
        <dbReference type="ChEBI" id="CHEBI:58702"/>
        <dbReference type="ChEBI" id="CHEBI:68483"/>
        <dbReference type="EC" id="2.5.1.7"/>
    </reaction>
</comment>
<comment type="pathway">
    <text evidence="1">Cell wall biogenesis; peptidoglycan biosynthesis.</text>
</comment>
<comment type="subcellular location">
    <subcellularLocation>
        <location evidence="1">Cytoplasm</location>
    </subcellularLocation>
</comment>
<comment type="similarity">
    <text evidence="1">Belongs to the EPSP synthase family. MurA subfamily.</text>
</comment>
<protein>
    <recommendedName>
        <fullName evidence="1">UDP-N-acetylglucosamine 1-carboxyvinyltransferase</fullName>
        <ecNumber evidence="1">2.5.1.7</ecNumber>
    </recommendedName>
    <alternativeName>
        <fullName evidence="1">Enoylpyruvate transferase</fullName>
    </alternativeName>
    <alternativeName>
        <fullName evidence="1">UDP-N-acetylglucosamine enolpyruvyl transferase</fullName>
        <shortName evidence="1">EPT</shortName>
    </alternativeName>
</protein>
<dbReference type="EC" id="2.5.1.7" evidence="1"/>
<dbReference type="EMBL" id="AP006618">
    <property type="protein sequence ID" value="BAD55914.1"/>
    <property type="molecule type" value="Genomic_DNA"/>
</dbReference>
<dbReference type="RefSeq" id="WP_011207599.1">
    <property type="nucleotide sequence ID" value="NC_006361.1"/>
</dbReference>
<dbReference type="SMR" id="Q5Z0X7"/>
<dbReference type="STRING" id="247156.NFA_10690"/>
<dbReference type="GeneID" id="61131891"/>
<dbReference type="KEGG" id="nfa:NFA_10690"/>
<dbReference type="eggNOG" id="COG0766">
    <property type="taxonomic scope" value="Bacteria"/>
</dbReference>
<dbReference type="HOGENOM" id="CLU_027387_0_0_11"/>
<dbReference type="OrthoDB" id="9803760at2"/>
<dbReference type="UniPathway" id="UPA00219"/>
<dbReference type="Proteomes" id="UP000006820">
    <property type="component" value="Chromosome"/>
</dbReference>
<dbReference type="GO" id="GO:0005737">
    <property type="term" value="C:cytoplasm"/>
    <property type="evidence" value="ECO:0007669"/>
    <property type="project" value="UniProtKB-SubCell"/>
</dbReference>
<dbReference type="GO" id="GO:0008760">
    <property type="term" value="F:UDP-N-acetylglucosamine 1-carboxyvinyltransferase activity"/>
    <property type="evidence" value="ECO:0007669"/>
    <property type="project" value="UniProtKB-UniRule"/>
</dbReference>
<dbReference type="GO" id="GO:0051301">
    <property type="term" value="P:cell division"/>
    <property type="evidence" value="ECO:0007669"/>
    <property type="project" value="UniProtKB-KW"/>
</dbReference>
<dbReference type="GO" id="GO:0071555">
    <property type="term" value="P:cell wall organization"/>
    <property type="evidence" value="ECO:0007669"/>
    <property type="project" value="UniProtKB-KW"/>
</dbReference>
<dbReference type="GO" id="GO:0009252">
    <property type="term" value="P:peptidoglycan biosynthetic process"/>
    <property type="evidence" value="ECO:0007669"/>
    <property type="project" value="UniProtKB-UniRule"/>
</dbReference>
<dbReference type="GO" id="GO:0008360">
    <property type="term" value="P:regulation of cell shape"/>
    <property type="evidence" value="ECO:0007669"/>
    <property type="project" value="UniProtKB-KW"/>
</dbReference>
<dbReference type="GO" id="GO:0019277">
    <property type="term" value="P:UDP-N-acetylgalactosamine biosynthetic process"/>
    <property type="evidence" value="ECO:0007669"/>
    <property type="project" value="InterPro"/>
</dbReference>
<dbReference type="CDD" id="cd01555">
    <property type="entry name" value="UdpNAET"/>
    <property type="match status" value="1"/>
</dbReference>
<dbReference type="Gene3D" id="3.65.10.10">
    <property type="entry name" value="Enolpyruvate transferase domain"/>
    <property type="match status" value="2"/>
</dbReference>
<dbReference type="HAMAP" id="MF_00111">
    <property type="entry name" value="MurA"/>
    <property type="match status" value="1"/>
</dbReference>
<dbReference type="InterPro" id="IPR001986">
    <property type="entry name" value="Enolpyruvate_Tfrase_dom"/>
</dbReference>
<dbReference type="InterPro" id="IPR036968">
    <property type="entry name" value="Enolpyruvate_Tfrase_sf"/>
</dbReference>
<dbReference type="InterPro" id="IPR050068">
    <property type="entry name" value="MurA_subfamily"/>
</dbReference>
<dbReference type="InterPro" id="IPR013792">
    <property type="entry name" value="RNA3'P_cycl/enolpyr_Trfase_a/b"/>
</dbReference>
<dbReference type="InterPro" id="IPR005750">
    <property type="entry name" value="UDP_GlcNAc_COvinyl_MurA"/>
</dbReference>
<dbReference type="NCBIfam" id="TIGR01072">
    <property type="entry name" value="murA"/>
    <property type="match status" value="1"/>
</dbReference>
<dbReference type="NCBIfam" id="NF006873">
    <property type="entry name" value="PRK09369.1"/>
    <property type="match status" value="1"/>
</dbReference>
<dbReference type="PANTHER" id="PTHR43783">
    <property type="entry name" value="UDP-N-ACETYLGLUCOSAMINE 1-CARBOXYVINYLTRANSFERASE"/>
    <property type="match status" value="1"/>
</dbReference>
<dbReference type="PANTHER" id="PTHR43783:SF1">
    <property type="entry name" value="UDP-N-ACETYLGLUCOSAMINE 1-CARBOXYVINYLTRANSFERASE"/>
    <property type="match status" value="1"/>
</dbReference>
<dbReference type="Pfam" id="PF00275">
    <property type="entry name" value="EPSP_synthase"/>
    <property type="match status" value="1"/>
</dbReference>
<dbReference type="SUPFAM" id="SSF55205">
    <property type="entry name" value="EPT/RTPC-like"/>
    <property type="match status" value="1"/>
</dbReference>
<proteinExistence type="inferred from homology"/>
<sequence>MSERFLVTGGNRLVGEVAVGGAKNSVLKLMAAALLAEGTTTITNCPDILDVPLMAEVLRGLGCEVTITDDAPGDRSVVTITTPAEPKYHADFPAVTQFRASVCVLGPLMARCKRAVVALPGGDAIGSRPLDMHQAGLRLLGATSEIEHGCVVARAEELRGARIRLDFPSVGATENILMAAVLAEGETVIDNAAREPDIVDLCNMLVQMGARISGAGTSVLTIQGVERLHPTEHRVIGDRIVAATWGIAAAMTMGDVRVTGVNPKHLALVLDKLRSAGARISFDVDGFRVVQPDRPRAVNFSTLPFPGFPTDLQPMAIGLAAIADGTSMITENIFEARFRFVEEMIRLGADARTDGHHAVVRGIPRLSSAPVWSSDIRAGAGLVLAGLVADGTTEVHDVFHIDRGYPNFVEQLQSLGGLVERVGGAE</sequence>